<keyword id="KW-0012">Acyltransferase</keyword>
<keyword id="KW-0963">Cytoplasm</keyword>
<keyword id="KW-0441">Lipid A biosynthesis</keyword>
<keyword id="KW-0444">Lipid biosynthesis</keyword>
<keyword id="KW-0443">Lipid metabolism</keyword>
<keyword id="KW-0677">Repeat</keyword>
<keyword id="KW-0808">Transferase</keyword>
<feature type="chain" id="PRO_0000188066" description="Acyl-[acyl-carrier-protein]--UDP-N-acetylglucosamine O-acyltransferase">
    <location>
        <begin position="1"/>
        <end position="264"/>
    </location>
</feature>
<evidence type="ECO:0000255" key="1">
    <source>
        <dbReference type="HAMAP-Rule" id="MF_00387"/>
    </source>
</evidence>
<protein>
    <recommendedName>
        <fullName evidence="1">Acyl-[acyl-carrier-protein]--UDP-N-acetylglucosamine O-acyltransferase</fullName>
        <shortName evidence="1">UDP-N-acetylglucosamine acyltransferase</shortName>
        <ecNumber evidence="1">2.3.1.129</ecNumber>
    </recommendedName>
</protein>
<gene>
    <name evidence="1" type="primary">lpxA</name>
</gene>
<organism>
    <name type="scientific">Rickettsia rickettsii</name>
    <dbReference type="NCBI Taxonomy" id="783"/>
    <lineage>
        <taxon>Bacteria</taxon>
        <taxon>Pseudomonadati</taxon>
        <taxon>Pseudomonadota</taxon>
        <taxon>Alphaproteobacteria</taxon>
        <taxon>Rickettsiales</taxon>
        <taxon>Rickettsiaceae</taxon>
        <taxon>Rickettsieae</taxon>
        <taxon>Rickettsia</taxon>
        <taxon>spotted fever group</taxon>
    </lineage>
</organism>
<comment type="function">
    <text>Involved in the biosynthesis of lipid A, a phosphorylated glycolipid that anchors the lipopolysaccharide to the outer membrane of the cell.</text>
</comment>
<comment type="catalytic activity">
    <reaction evidence="1">
        <text>a (3R)-hydroxyacyl-[ACP] + UDP-N-acetyl-alpha-D-glucosamine = a UDP-3-O-[(3R)-3-hydroxyacyl]-N-acetyl-alpha-D-glucosamine + holo-[ACP]</text>
        <dbReference type="Rhea" id="RHEA:67812"/>
        <dbReference type="Rhea" id="RHEA-COMP:9685"/>
        <dbReference type="Rhea" id="RHEA-COMP:9945"/>
        <dbReference type="ChEBI" id="CHEBI:57705"/>
        <dbReference type="ChEBI" id="CHEBI:64479"/>
        <dbReference type="ChEBI" id="CHEBI:78827"/>
        <dbReference type="ChEBI" id="CHEBI:173225"/>
        <dbReference type="EC" id="2.3.1.129"/>
    </reaction>
</comment>
<comment type="pathway">
    <text evidence="1">Glycolipid biosynthesis; lipid IV(A) biosynthesis; lipid IV(A) from (3R)-3-hydroxytetradecanoyl-[acyl-carrier-protein] and UDP-N-acetyl-alpha-D-glucosamine: step 1/6.</text>
</comment>
<comment type="subunit">
    <text evidence="1">Homotrimer.</text>
</comment>
<comment type="subcellular location">
    <subcellularLocation>
        <location>Cytoplasm</location>
    </subcellularLocation>
</comment>
<comment type="similarity">
    <text evidence="1">Belongs to the transferase hexapeptide repeat family. LpxA subfamily.</text>
</comment>
<reference key="1">
    <citation type="journal article" date="1994" name="Gene">
        <title>Characterization of a Rickettsia rickettsii DNA fragment analogous to the fir A-ORF17-lpxA region of Escherichia coli.</title>
        <authorList>
            <person name="Shaw E.I."/>
            <person name="Wood D.O."/>
        </authorList>
    </citation>
    <scope>NUCLEOTIDE SEQUENCE [GENOMIC DNA]</scope>
</reference>
<sequence length="264" mass="28333">MSNSNIHTTAVIAEGAKLGKNVKIGPYCIIGPEVVLNDNVELKSHVVIEGITEIGENTVIYPFASIGQPPQILKYANERSSTIIGSNNTIREYVTVQAGSQGGGMMTRVGNNNLFMVGVHIGHDCKIGNNVVFANYVSLAGHIGVGDYAIIGGLSAVHQYARIGEYSMIGGLSPVGADVIPFGLVSSKRAVLEGLNLIGMNRKGFDKVKSLSALKAIEEIFSGEGNFAERIKQVAEKYNNNSIVIQIIDFLNQDSSRAFCRFEK</sequence>
<accession>P32199</accession>
<dbReference type="EC" id="2.3.1.129" evidence="1"/>
<dbReference type="EMBL" id="L22690">
    <property type="protein sequence ID" value="AAA26386.1"/>
    <property type="molecule type" value="Genomic_DNA"/>
</dbReference>
<dbReference type="RefSeq" id="WP_012150231.1">
    <property type="nucleotide sequence ID" value="NZ_CP151153.1"/>
</dbReference>
<dbReference type="SMR" id="P32199"/>
<dbReference type="GeneID" id="79936820"/>
<dbReference type="OMA" id="ECVTINR"/>
<dbReference type="UniPathway" id="UPA00359">
    <property type="reaction ID" value="UER00477"/>
</dbReference>
<dbReference type="GO" id="GO:0005737">
    <property type="term" value="C:cytoplasm"/>
    <property type="evidence" value="ECO:0007669"/>
    <property type="project" value="UniProtKB-SubCell"/>
</dbReference>
<dbReference type="GO" id="GO:0016020">
    <property type="term" value="C:membrane"/>
    <property type="evidence" value="ECO:0007669"/>
    <property type="project" value="GOC"/>
</dbReference>
<dbReference type="GO" id="GO:0008780">
    <property type="term" value="F:acyl-[acyl-carrier-protein]-UDP-N-acetylglucosamine O-acyltransferase activity"/>
    <property type="evidence" value="ECO:0007669"/>
    <property type="project" value="UniProtKB-UniRule"/>
</dbReference>
<dbReference type="GO" id="GO:0009245">
    <property type="term" value="P:lipid A biosynthetic process"/>
    <property type="evidence" value="ECO:0007669"/>
    <property type="project" value="UniProtKB-UniRule"/>
</dbReference>
<dbReference type="CDD" id="cd03351">
    <property type="entry name" value="LbH_UDP-GlcNAc_AT"/>
    <property type="match status" value="1"/>
</dbReference>
<dbReference type="Gene3D" id="2.160.10.10">
    <property type="entry name" value="Hexapeptide repeat proteins"/>
    <property type="match status" value="1"/>
</dbReference>
<dbReference type="Gene3D" id="1.20.1180.10">
    <property type="entry name" value="Udp N-acetylglucosamine O-acyltransferase, C-terminal domain"/>
    <property type="match status" value="1"/>
</dbReference>
<dbReference type="HAMAP" id="MF_00387">
    <property type="entry name" value="LpxA"/>
    <property type="match status" value="1"/>
</dbReference>
<dbReference type="InterPro" id="IPR029098">
    <property type="entry name" value="Acetyltransf_C"/>
</dbReference>
<dbReference type="InterPro" id="IPR037157">
    <property type="entry name" value="Acetyltransf_C_sf"/>
</dbReference>
<dbReference type="InterPro" id="IPR001451">
    <property type="entry name" value="Hexapep"/>
</dbReference>
<dbReference type="InterPro" id="IPR018357">
    <property type="entry name" value="Hexapep_transf_CS"/>
</dbReference>
<dbReference type="InterPro" id="IPR010137">
    <property type="entry name" value="Lipid_A_LpxA"/>
</dbReference>
<dbReference type="InterPro" id="IPR011004">
    <property type="entry name" value="Trimer_LpxA-like_sf"/>
</dbReference>
<dbReference type="NCBIfam" id="TIGR01852">
    <property type="entry name" value="lipid_A_lpxA"/>
    <property type="match status" value="1"/>
</dbReference>
<dbReference type="NCBIfam" id="NF003657">
    <property type="entry name" value="PRK05289.1"/>
    <property type="match status" value="1"/>
</dbReference>
<dbReference type="PANTHER" id="PTHR43480">
    <property type="entry name" value="ACYL-[ACYL-CARRIER-PROTEIN]--UDP-N-ACETYLGLUCOSAMINE O-ACYLTRANSFERASE"/>
    <property type="match status" value="1"/>
</dbReference>
<dbReference type="PANTHER" id="PTHR43480:SF1">
    <property type="entry name" value="ACYL-[ACYL-CARRIER-PROTEIN]--UDP-N-ACETYLGLUCOSAMINE O-ACYLTRANSFERASE, MITOCHONDRIAL-RELATED"/>
    <property type="match status" value="1"/>
</dbReference>
<dbReference type="Pfam" id="PF13720">
    <property type="entry name" value="Acetyltransf_11"/>
    <property type="match status" value="1"/>
</dbReference>
<dbReference type="Pfam" id="PF00132">
    <property type="entry name" value="Hexapep"/>
    <property type="match status" value="2"/>
</dbReference>
<dbReference type="PIRSF" id="PIRSF000456">
    <property type="entry name" value="UDP-GlcNAc_acltr"/>
    <property type="match status" value="1"/>
</dbReference>
<dbReference type="SUPFAM" id="SSF51161">
    <property type="entry name" value="Trimeric LpxA-like enzymes"/>
    <property type="match status" value="1"/>
</dbReference>
<dbReference type="PROSITE" id="PS00101">
    <property type="entry name" value="HEXAPEP_TRANSFERASES"/>
    <property type="match status" value="1"/>
</dbReference>
<name>LPXA_RICRI</name>
<proteinExistence type="inferred from homology"/>